<feature type="signal peptide" evidence="2">
    <location>
        <begin position="1"/>
        <end position="13"/>
    </location>
</feature>
<feature type="chain" id="PRO_0000037220" description="Spike glycoprotein">
    <location>
        <begin position="14"/>
        <end position="1235"/>
    </location>
</feature>
<feature type="chain" id="PRO_0000037221" description="Spike protein S1" evidence="1">
    <location>
        <begin position="14"/>
        <end position="628"/>
    </location>
</feature>
<feature type="chain" id="PRO_0000037222" description="Spike protein S2" evidence="1">
    <location>
        <begin position="629"/>
        <end position="1235"/>
    </location>
</feature>
<feature type="chain" id="PRO_0000444086" description="Spike protein S2'" evidence="2">
    <location>
        <begin position="781"/>
        <end position="1235"/>
    </location>
</feature>
<feature type="topological domain" description="Extracellular" evidence="2">
    <location>
        <begin position="14"/>
        <end position="1176"/>
    </location>
</feature>
<feature type="transmembrane region" description="Helical" evidence="2">
    <location>
        <begin position="1177"/>
        <end position="1197"/>
    </location>
</feature>
<feature type="topological domain" description="Cytoplasmic" evidence="2">
    <location>
        <begin position="1198"/>
        <end position="1235"/>
    </location>
</feature>
<feature type="domain" description="BetaCoV S1-NTD" evidence="4">
    <location>
        <begin position="15"/>
        <end position="296"/>
    </location>
</feature>
<feature type="domain" description="BetaCoV S1-CTD" evidence="3">
    <location>
        <begin position="327"/>
        <end position="477"/>
    </location>
</feature>
<feature type="region of interest" description="Receptor binding site">
    <location>
        <begin position="1"/>
        <end position="330"/>
    </location>
</feature>
<feature type="region of interest" description="Fusion peptide 1" evidence="2">
    <location>
        <begin position="781"/>
        <end position="802"/>
    </location>
</feature>
<feature type="region of interest" description="Fusion peptide 2" evidence="2">
    <location>
        <begin position="800"/>
        <end position="820"/>
    </location>
</feature>
<feature type="region of interest" description="Heptad repeat 1" evidence="2">
    <location>
        <begin position="881"/>
        <end position="931"/>
    </location>
</feature>
<feature type="region of interest" description="Heptad repeat 2" evidence="2">
    <location>
        <begin position="1125"/>
        <end position="1165"/>
    </location>
</feature>
<feature type="coiled-coil region" evidence="2">
    <location>
        <begin position="910"/>
        <end position="954"/>
    </location>
</feature>
<feature type="coiled-coil region" evidence="2">
    <location>
        <begin position="1138"/>
        <end position="1166"/>
    </location>
</feature>
<feature type="short sequence motif" description="KxHxx" evidence="2">
    <location>
        <begin position="1231"/>
        <end position="1235"/>
    </location>
</feature>
<feature type="site" description="Cleavage; by host" evidence="1">
    <location>
        <begin position="628"/>
        <end position="629"/>
    </location>
</feature>
<feature type="site" description="Cleavage" evidence="2">
    <location>
        <begin position="780"/>
        <end position="781"/>
    </location>
</feature>
<feature type="glycosylation site" description="N-linked (GlcNAc...) asparagine; by host" evidence="2">
    <location>
        <position position="31"/>
    </location>
</feature>
<feature type="glycosylation site" description="N-linked (GlcNAc...) asparagine; by host" evidence="2">
    <location>
        <position position="60"/>
    </location>
</feature>
<feature type="glycosylation site" description="N-linked (GlcNAc...) asparagine; by host" evidence="2">
    <location>
        <position position="134"/>
    </location>
</feature>
<feature type="glycosylation site" description="N-linked (GlcNAc...) asparagine; by host" evidence="2">
    <location>
        <position position="192"/>
    </location>
</feature>
<feature type="glycosylation site" description="N-linked (GlcNAc...) asparagine; by host" evidence="2">
    <location>
        <position position="357"/>
    </location>
</feature>
<feature type="glycosylation site" description="N-linked (GlcNAc...) asparagine; by host" evidence="2">
    <location>
        <position position="435"/>
    </location>
</feature>
<feature type="glycosylation site" description="N-linked (GlcNAc...) asparagine; by host" evidence="2">
    <location>
        <position position="536"/>
    </location>
</feature>
<feature type="glycosylation site" description="N-linked (GlcNAc...) asparagine; by host" evidence="2">
    <location>
        <position position="568"/>
    </location>
</feature>
<feature type="glycosylation site" description="N-linked (GlcNAc...) asparagine; by host" evidence="2">
    <location>
        <position position="576"/>
    </location>
</feature>
<feature type="glycosylation site" description="N-linked (GlcNAc...) asparagine; by host" evidence="2">
    <location>
        <position position="599"/>
    </location>
</feature>
<feature type="glycosylation site" description="N-linked (GlcNAc...) asparagine; by host" evidence="2">
    <location>
        <position position="648"/>
    </location>
</feature>
<feature type="glycosylation site" description="N-linked (GlcNAc...) asparagine; by host" evidence="2">
    <location>
        <position position="665"/>
    </location>
</feature>
<feature type="glycosylation site" description="N-linked (GlcNAc...) asparagine; by host" evidence="2">
    <location>
        <position position="804"/>
    </location>
</feature>
<feature type="glycosylation site" description="N-linked (GlcNAc...) asparagine; by host" evidence="2">
    <location>
        <position position="1091"/>
    </location>
</feature>
<feature type="glycosylation site" description="N-linked (GlcNAc...) asparagine; by host" evidence="2">
    <location>
        <position position="1101"/>
    </location>
</feature>
<feature type="glycosylation site" description="N-linked (GlcNAc...) asparagine; by host" evidence="2">
    <location>
        <position position="1120"/>
    </location>
</feature>
<feature type="glycosylation site" description="N-linked (GlcNAc...) asparagine; by host" evidence="2">
    <location>
        <position position="1136"/>
    </location>
</feature>
<feature type="glycosylation site" description="N-linked (GlcNAc...) asparagine; by host" evidence="2">
    <location>
        <position position="1157"/>
    </location>
</feature>
<feature type="disulfide bond" evidence="4">
    <location>
        <begin position="21"/>
        <end position="158"/>
    </location>
</feature>
<feature type="disulfide bond" evidence="4">
    <location>
        <begin position="153"/>
        <end position="187"/>
    </location>
</feature>
<feature type="disulfide bond" evidence="4">
    <location>
        <begin position="165"/>
        <end position="246"/>
    </location>
</feature>
<feature type="disulfide bond" evidence="4">
    <location>
        <begin position="284"/>
        <end position="294"/>
    </location>
</feature>
<feature type="disulfide bond" evidence="3">
    <location>
        <begin position="329"/>
        <end position="354"/>
    </location>
</feature>
<feature type="disulfide bond" evidence="3">
    <location>
        <begin position="372"/>
        <end position="425"/>
    </location>
</feature>
<feature type="disulfide bond" evidence="3">
    <location>
        <begin position="384"/>
        <end position="475"/>
    </location>
</feature>
<feature type="disulfide bond" evidence="2">
    <location>
        <begin position="805"/>
        <end position="816"/>
    </location>
</feature>
<protein>
    <recommendedName>
        <fullName evidence="2">Spike glycoprotein</fullName>
        <shortName evidence="2">S glycoprotein</shortName>
    </recommendedName>
    <alternativeName>
        <fullName evidence="2">E2</fullName>
    </alternativeName>
    <alternativeName>
        <fullName evidence="2">Peplomer protein</fullName>
    </alternativeName>
    <component>
        <recommendedName>
            <fullName evidence="2">Spike protein S1</fullName>
        </recommendedName>
    </component>
    <component>
        <recommendedName>
            <fullName evidence="2">Spike protein S2</fullName>
        </recommendedName>
    </component>
    <component>
        <recommendedName>
            <fullName evidence="2">Spike protein S2'</fullName>
        </recommendedName>
    </component>
</protein>
<proteinExistence type="evidence at protein level"/>
<organismHost>
    <name type="scientific">Mus musculus</name>
    <name type="common">Mouse</name>
    <dbReference type="NCBI Taxonomy" id="10090"/>
</organismHost>
<accession>P11225</accession>
<sequence length="1235" mass="136654">MLFVFILLLPSCLGYIGDFRCIQTVNYNGNNASAPSISTEAVDVSKGRGTYYVLDRVYLNATLLLTGYYPVDGSNYRNLALTGTNTLSLTWFKPPFLSEFNDGIFAKVQNLKTNTPTGATSYFPTIVIGSLFGNTSYTVVLEPYNNIIMASVCTYTICQLPYTPCKPNTNGNRVIGFWHTDVKPPICLLKRNFTFNVNAPWLYFHFYQQGGTFYAYYADKPSATTFLFSVYIGDILTQYFVLPFICTPTAGSTLAPLYWVTPLLKRQYLFNFNEKGVITSAVDCASSYISEIKCKTQSLLPSTGVYDLSGYTVQPVGVVYRRVPNLPDCKIEEWLTAKSVPSPLNWERRTFQNCNFNLSSLLRYVQAESLSCNNIDASKVYGMCFGSVSVDKFAIPRSRQIDLQIGNSGFLQTANYKIDTAATSCQLYYSLPKNNVTINNYNPSSWNRRYGFKVNDRCQIFANILLNGINSGTTCSTDLQLPNTEVATGVCVRYDLYGITGQGVFKEVKADYYNSWQALLYDVNGNLNGFRDLTTNKTYTIRSCYSGRVSAAYHKEAPEPALLYRNINCSYVFTNNISREENPLNYFDSYLGCVVNADNRTDEALPNCNLRMGAGLCVDYSKSRRARRSVSTGYRLTTFEPYMPMLVNDSVQSVGGLYEMQIPTNFTIGHHEEFIQIRAPKVTIDCAAFVCGDNAACRQQLVEYGSFCDNVNAILNEVNNLLDNMQLQVASALMQGVTISSRLPDGISGPIDDINFSPLLGCIGSTCAEDGNGPSAIRGRSAIEDLLFDKVKLSDVGFVEAYNNCTGGQEVRDLLCVQSFNGIKVLPPVLSESQISGYTAGATAAAMFPPWTAAAGVPFSLNVQYRINGLGVTMNVLSENQKMIASAFNNALGAIQEGFDATNSALGKIQSVVNANAEALNNLLNQLSNRFGAISASLQEILTRLDAVEAKAQIDRLINGRLTALNAYISKQLSDSTLIKFSAAQAIEKVNECVKSQTTRINFCGNGNHILSLVQNAPYGLCFIHFSYVPTSFKTANVSPGLCISGDRGLAPKAGYFVQDNGEWKFTGSNYYYPEPITDKNSVAMISCAVNYTKAPEVFLNNSIPNLPDFKEELDKWFKNQTSIAPDLSLDFEKLNVTFLDLTYEMNRIQDAIKKLNESYINLKEVGTYEMYVKWPWYVWLLIGLAGVAVCVLLFFICCCTGCGSCCFRKCGSCCDEYGGHQDSIVIHNISAHED</sequence>
<reference key="1">
    <citation type="journal article" date="1987" name="J. Gen. Virol.">
        <title>Nucleotide sequence of the gene encoding the surface projection glycoprotein of coronavirus MHV-JHM.</title>
        <authorList>
            <person name="Schmidt I."/>
            <person name="Skinner M.A."/>
            <person name="Siddell S.G."/>
        </authorList>
    </citation>
    <scope>NUCLEOTIDE SEQUENCE [MRNA]</scope>
</reference>
<reference key="2">
    <citation type="journal article" date="1994" name="J. Virol.">
        <title>Bgp2, a new member of the carcinoembryonic antigen-related gene family, encodes an alternative receptor for mouse hepatitis viruses.</title>
        <authorList>
            <person name="Nedellec P."/>
            <person name="Dveksler G.S."/>
            <person name="Daniels E."/>
            <person name="Turbide C."/>
            <person name="Chow B."/>
            <person name="Basile A.A."/>
            <person name="Holmes K.V."/>
            <person name="Beauchemin N."/>
        </authorList>
    </citation>
    <scope>INTERACTION WITH MURINE CEACAM2</scope>
</reference>
<name>SPIKE_CVMJH</name>
<evidence type="ECO:0000250" key="1"/>
<evidence type="ECO:0000255" key="2">
    <source>
        <dbReference type="HAMAP-Rule" id="MF_04099"/>
    </source>
</evidence>
<evidence type="ECO:0000255" key="3">
    <source>
        <dbReference type="PROSITE-ProRule" id="PRU01269"/>
    </source>
</evidence>
<evidence type="ECO:0000255" key="4">
    <source>
        <dbReference type="PROSITE-ProRule" id="PRU01270"/>
    </source>
</evidence>
<dbReference type="EMBL" id="X04797">
    <property type="protein sequence ID" value="CAA28484.1"/>
    <property type="molecule type" value="mRNA"/>
</dbReference>
<dbReference type="PIR" id="A33095">
    <property type="entry name" value="VGIHMJ"/>
</dbReference>
<dbReference type="PDB" id="2ZSV">
    <property type="method" value="X-ray"/>
    <property type="resolution" value="1.80 A"/>
    <property type="chains" value="E/F=457-464"/>
</dbReference>
<dbReference type="PDB" id="2ZSW">
    <property type="method" value="X-ray"/>
    <property type="resolution" value="2.80 A"/>
    <property type="chains" value="M/N/O/P=457-464"/>
</dbReference>
<dbReference type="PDBsum" id="2ZSV"/>
<dbReference type="PDBsum" id="2ZSW"/>
<dbReference type="SMR" id="P11225"/>
<dbReference type="GlyCosmos" id="P11225">
    <property type="glycosylation" value="18 sites, No reported glycans"/>
</dbReference>
<dbReference type="EvolutionaryTrace" id="P11225"/>
<dbReference type="Proteomes" id="UP000007193">
    <property type="component" value="Genome"/>
</dbReference>
<dbReference type="GO" id="GO:0044173">
    <property type="term" value="C:host cell endoplasmic reticulum-Golgi intermediate compartment membrane"/>
    <property type="evidence" value="ECO:0007669"/>
    <property type="project" value="UniProtKB-SubCell"/>
</dbReference>
<dbReference type="GO" id="GO:0020002">
    <property type="term" value="C:host cell plasma membrane"/>
    <property type="evidence" value="ECO:0007669"/>
    <property type="project" value="UniProtKB-SubCell"/>
</dbReference>
<dbReference type="GO" id="GO:0016020">
    <property type="term" value="C:membrane"/>
    <property type="evidence" value="ECO:0007669"/>
    <property type="project" value="UniProtKB-UniRule"/>
</dbReference>
<dbReference type="GO" id="GO:0019031">
    <property type="term" value="C:viral envelope"/>
    <property type="evidence" value="ECO:0007669"/>
    <property type="project" value="UniProtKB-UniRule"/>
</dbReference>
<dbReference type="GO" id="GO:0055036">
    <property type="term" value="C:virion membrane"/>
    <property type="evidence" value="ECO:0007669"/>
    <property type="project" value="UniProtKB-SubCell"/>
</dbReference>
<dbReference type="GO" id="GO:0075509">
    <property type="term" value="P:endocytosis involved in viral entry into host cell"/>
    <property type="evidence" value="ECO:0007669"/>
    <property type="project" value="UniProtKB-UniRule"/>
</dbReference>
<dbReference type="GO" id="GO:0039654">
    <property type="term" value="P:fusion of virus membrane with host endosome membrane"/>
    <property type="evidence" value="ECO:0007669"/>
    <property type="project" value="UniProtKB-UniRule"/>
</dbReference>
<dbReference type="GO" id="GO:0019064">
    <property type="term" value="P:fusion of virus membrane with host plasma membrane"/>
    <property type="evidence" value="ECO:0007669"/>
    <property type="project" value="UniProtKB-UniRule"/>
</dbReference>
<dbReference type="GO" id="GO:0046813">
    <property type="term" value="P:receptor-mediated virion attachment to host cell"/>
    <property type="evidence" value="ECO:0007669"/>
    <property type="project" value="UniProtKB-UniRule"/>
</dbReference>
<dbReference type="CDD" id="cd22380">
    <property type="entry name" value="HKU1-CoV-like_Spike_SD1-2_S1-S2_S2"/>
    <property type="match status" value="1"/>
</dbReference>
<dbReference type="CDD" id="cd21625">
    <property type="entry name" value="MHV-like_Spike_S1_NTD"/>
    <property type="match status" value="1"/>
</dbReference>
<dbReference type="FunFam" id="1.20.5.300:FF:000003">
    <property type="entry name" value="Spike glycoprotein"/>
    <property type="match status" value="1"/>
</dbReference>
<dbReference type="FunFam" id="1.20.5.300:FF:000006">
    <property type="entry name" value="Spike glycoprotein"/>
    <property type="match status" value="1"/>
</dbReference>
<dbReference type="FunFam" id="2.60.120.960:FF:000002">
    <property type="entry name" value="Spike glycoprotein"/>
    <property type="match status" value="1"/>
</dbReference>
<dbReference type="Gene3D" id="1.20.5.300">
    <property type="match status" value="2"/>
</dbReference>
<dbReference type="Gene3D" id="3.30.70.1840">
    <property type="match status" value="1"/>
</dbReference>
<dbReference type="Gene3D" id="2.60.120.960">
    <property type="entry name" value="Spike glycoprotein, N-terminal domain"/>
    <property type="match status" value="1"/>
</dbReference>
<dbReference type="HAMAP" id="MF_04099">
    <property type="entry name" value="BETA_CORONA_SPIKE"/>
    <property type="match status" value="1"/>
</dbReference>
<dbReference type="InterPro" id="IPR032500">
    <property type="entry name" value="bCoV_S1_N"/>
</dbReference>
<dbReference type="InterPro" id="IPR042578">
    <property type="entry name" value="BETA_CORONA_SPIKE"/>
</dbReference>
<dbReference type="InterPro" id="IPR043607">
    <property type="entry name" value="CoV_S1_C"/>
</dbReference>
<dbReference type="InterPro" id="IPR043473">
    <property type="entry name" value="S2_sf_CoV"/>
</dbReference>
<dbReference type="InterPro" id="IPR043002">
    <property type="entry name" value="Spike_N_sf"/>
</dbReference>
<dbReference type="InterPro" id="IPR044339">
    <property type="entry name" value="Spike_S1_NTD_MHV-like"/>
</dbReference>
<dbReference type="InterPro" id="IPR018548">
    <property type="entry name" value="Spike_S1_RBD_bCoV"/>
</dbReference>
<dbReference type="InterPro" id="IPR036326">
    <property type="entry name" value="Spike_S1_RBD_sf_bCoV"/>
</dbReference>
<dbReference type="InterPro" id="IPR002552">
    <property type="entry name" value="Spike_S2_CoV"/>
</dbReference>
<dbReference type="InterPro" id="IPR043614">
    <property type="entry name" value="Spike_S2_CoV_C"/>
</dbReference>
<dbReference type="InterPro" id="IPR044873">
    <property type="entry name" value="Spike_S2_CoV_HR1"/>
</dbReference>
<dbReference type="InterPro" id="IPR044874">
    <property type="entry name" value="Spike_S2_CoV_HR2"/>
</dbReference>
<dbReference type="Pfam" id="PF16451">
    <property type="entry name" value="bCoV_S1_N"/>
    <property type="match status" value="1"/>
</dbReference>
<dbReference type="Pfam" id="PF09408">
    <property type="entry name" value="bCoV_S1_RBD"/>
    <property type="match status" value="1"/>
</dbReference>
<dbReference type="Pfam" id="PF19209">
    <property type="entry name" value="CoV_S1_C"/>
    <property type="match status" value="1"/>
</dbReference>
<dbReference type="Pfam" id="PF01601">
    <property type="entry name" value="CoV_S2"/>
    <property type="match status" value="1"/>
</dbReference>
<dbReference type="Pfam" id="PF19214">
    <property type="entry name" value="CoV_S2_C"/>
    <property type="match status" value="1"/>
</dbReference>
<dbReference type="SUPFAM" id="SSF111474">
    <property type="entry name" value="Coronavirus S2 glycoprotein"/>
    <property type="match status" value="2"/>
</dbReference>
<dbReference type="SUPFAM" id="SSF143587">
    <property type="entry name" value="SARS receptor-binding domain-like"/>
    <property type="match status" value="1"/>
</dbReference>
<dbReference type="PROSITE" id="PS51921">
    <property type="entry name" value="BCOV_S1_CTD"/>
    <property type="match status" value="1"/>
</dbReference>
<dbReference type="PROSITE" id="PS51922">
    <property type="entry name" value="BCOV_S1_NTD"/>
    <property type="match status" value="1"/>
</dbReference>
<dbReference type="PROSITE" id="PS51923">
    <property type="entry name" value="COV_S2_HR1"/>
    <property type="match status" value="1"/>
</dbReference>
<dbReference type="PROSITE" id="PS51924">
    <property type="entry name" value="COV_S2_HR2"/>
    <property type="match status" value="1"/>
</dbReference>
<comment type="function">
    <molecule>Spike protein S1</molecule>
    <text evidence="2">Attaches the virion to the cell membrane by interacting with host receptor, initiating the infection.</text>
</comment>
<comment type="function">
    <molecule>Spike protein S2</molecule>
    <text evidence="2">Mediates fusion of the virion and cellular membranes by acting as a class I viral fusion protein. Under the current model, the protein has at least three conformational states: pre-fusion native state, pre-hairpin intermediate state, and post-fusion hairpin state. During viral and target cell membrane fusion, the coiled coil regions (heptad repeats) assume a trimer-of-hairpins structure, positioning the fusion peptide in close proximity to the C-terminal region of the ectodomain. The formation of this structure appears to drive apposition and subsequent fusion of viral and target cell membranes.</text>
</comment>
<comment type="function">
    <molecule>Spike protein S2'</molecule>
    <text evidence="2">Acts as a viral fusion peptide which is unmasked following S2 cleavage occurring upon virus endocytosis.</text>
</comment>
<comment type="subunit">
    <text evidence="2">Homotrimer; each monomer consists of a S1 and a S2 subunit. The resulting peplomers protrude from the virus surface as spikes.</text>
</comment>
<comment type="subcellular location">
    <subcellularLocation>
        <location evidence="2">Virion membrane</location>
        <topology evidence="2">Single-pass type I membrane protein</topology>
    </subcellularLocation>
    <subcellularLocation>
        <location evidence="2">Host endoplasmic reticulum-Golgi intermediate compartment membrane</location>
        <topology evidence="2">Single-pass type I membrane protein</topology>
    </subcellularLocation>
    <subcellularLocation>
        <location evidence="2">Host cell membrane</location>
        <topology evidence="2">Single-pass type I membrane protein</topology>
    </subcellularLocation>
    <text evidence="2">Accumulates in the endoplasmic reticulum-Golgi intermediate compartment, where it participates in virus particle assembly. Some S oligomers are transported to the host plasma membrane, where they may mediate cell-cell fusion.</text>
</comment>
<comment type="domain">
    <text evidence="2">Fusion peptide 1 (FP1) and fusion peptide 2 (FP2) function cooperatively and have a membrane-ordering effect on lipid headgroups and shallow hydrophobic regions of target bilayers. They are considered as two domains of an extended, bipartite FP. The membrane-ordering activity is calcium-dependent and also dependent on correct folding, which is maintained by an internal disulfide bond in FP2.</text>
</comment>
<comment type="PTM">
    <text evidence="2">Specific enzymatic cleavages in vivo yield mature proteins. The precursor is processed into S1 and S2 by host cell furin or another cellular protease to yield the mature S1 and S2 proteins. Additionally, a second cleavage leads to the release of a fusion peptide after viral attachment to host cell receptor.</text>
</comment>
<comment type="PTM">
    <text evidence="2">The cytoplasmic Cys-rich domain is palmitoylated. Spike glycoprotein is digested within host endosomes.</text>
</comment>
<comment type="similarity">
    <text evidence="2">Belongs to the betacoronaviruses spike protein family.</text>
</comment>
<organism>
    <name type="scientific">Murine coronavirus (strain JHM)</name>
    <name type="common">MHV-JHM</name>
    <name type="synonym">Murine hepatitis virus</name>
    <dbReference type="NCBI Taxonomy" id="11144"/>
    <lineage>
        <taxon>Viruses</taxon>
        <taxon>Riboviria</taxon>
        <taxon>Orthornavirae</taxon>
        <taxon>Pisuviricota</taxon>
        <taxon>Pisoniviricetes</taxon>
        <taxon>Nidovirales</taxon>
        <taxon>Cornidovirineae</taxon>
        <taxon>Coronaviridae</taxon>
        <taxon>Orthocoronavirinae</taxon>
        <taxon>Betacoronavirus</taxon>
        <taxon>Embecovirus</taxon>
        <taxon>Murine coronavirus</taxon>
    </lineage>
</organism>
<gene>
    <name evidence="2" type="primary">S</name>
    <name type="ORF">3</name>
</gene>
<keyword id="KW-0002">3D-structure</keyword>
<keyword id="KW-0175">Coiled coil</keyword>
<keyword id="KW-1015">Disulfide bond</keyword>
<keyword id="KW-1170">Fusion of virus membrane with host endosomal membrane</keyword>
<keyword id="KW-1168">Fusion of virus membrane with host membrane</keyword>
<keyword id="KW-0325">Glycoprotein</keyword>
<keyword id="KW-1032">Host cell membrane</keyword>
<keyword id="KW-1043">Host membrane</keyword>
<keyword id="KW-0945">Host-virus interaction</keyword>
<keyword id="KW-0449">Lipoprotein</keyword>
<keyword id="KW-0472">Membrane</keyword>
<keyword id="KW-0564">Palmitate</keyword>
<keyword id="KW-0732">Signal</keyword>
<keyword id="KW-0812">Transmembrane</keyword>
<keyword id="KW-1133">Transmembrane helix</keyword>
<keyword id="KW-1161">Viral attachment to host cell</keyword>
<keyword id="KW-0261">Viral envelope protein</keyword>
<keyword id="KW-1162">Viral penetration into host cytoplasm</keyword>
<keyword id="KW-0946">Virion</keyword>
<keyword id="KW-0843">Virulence</keyword>
<keyword id="KW-1160">Virus entry into host cell</keyword>